<keyword id="KW-0010">Activator</keyword>
<keyword id="KW-0963">Cytoplasm</keyword>
<keyword id="KW-0238">DNA-binding</keyword>
<keyword id="KW-0276">Fatty acid metabolism</keyword>
<keyword id="KW-0443">Lipid metabolism</keyword>
<keyword id="KW-1185">Reference proteome</keyword>
<keyword id="KW-0678">Repressor</keyword>
<keyword id="KW-0804">Transcription</keyword>
<keyword id="KW-0805">Transcription regulation</keyword>
<proteinExistence type="inferred from homology"/>
<sequence>MVIKAQSPAGFAEEYIIESIWNNRFPPGSILPAERELSELIGVTRTTLREVLQRLARDGWLTIQHGKPTKVNNFWETSGLNILETLARLDHESVPQLIDNLLSVRTNIATIFIRTALRMHPERAREVLATADEVEDHADAFAELDYNIFRGLAFASGNPIYGLILNGMKGLYTRIGRHYFSNPEARSLALGFYHKLGTLSREGLHDQVYDVVRTYGRESGEIWHRMQKNLPGDLAMHSR</sequence>
<protein>
    <recommendedName>
        <fullName evidence="1">Fatty acid metabolism regulator protein</fullName>
    </recommendedName>
</protein>
<name>FADR_CROS8</name>
<comment type="function">
    <text evidence="1">Multifunctional regulator of fatty acid metabolism.</text>
</comment>
<comment type="subunit">
    <text evidence="1">Homodimer.</text>
</comment>
<comment type="subcellular location">
    <subcellularLocation>
        <location evidence="1">Cytoplasm</location>
    </subcellularLocation>
</comment>
<feature type="chain" id="PRO_1000045460" description="Fatty acid metabolism regulator protein">
    <location>
        <begin position="1"/>
        <end position="239"/>
    </location>
</feature>
<feature type="domain" description="HTH gntR-type" evidence="1">
    <location>
        <begin position="6"/>
        <end position="74"/>
    </location>
</feature>
<feature type="DNA-binding region" description="H-T-H motif" evidence="1">
    <location>
        <begin position="34"/>
        <end position="53"/>
    </location>
</feature>
<reference key="1">
    <citation type="journal article" date="2010" name="PLoS ONE">
        <title>Genome sequence of Cronobacter sakazakii BAA-894 and comparative genomic hybridization analysis with other Cronobacter species.</title>
        <authorList>
            <person name="Kucerova E."/>
            <person name="Clifton S.W."/>
            <person name="Xia X.Q."/>
            <person name="Long F."/>
            <person name="Porwollik S."/>
            <person name="Fulton L."/>
            <person name="Fronick C."/>
            <person name="Minx P."/>
            <person name="Kyung K."/>
            <person name="Warren W."/>
            <person name="Fulton R."/>
            <person name="Feng D."/>
            <person name="Wollam A."/>
            <person name="Shah N."/>
            <person name="Bhonagiri V."/>
            <person name="Nash W.E."/>
            <person name="Hallsworth-Pepin K."/>
            <person name="Wilson R.K."/>
            <person name="McClelland M."/>
            <person name="Forsythe S.J."/>
        </authorList>
    </citation>
    <scope>NUCLEOTIDE SEQUENCE [LARGE SCALE GENOMIC DNA]</scope>
    <source>
        <strain>ATCC BAA-894</strain>
    </source>
</reference>
<organism>
    <name type="scientific">Cronobacter sakazakii (strain ATCC BAA-894)</name>
    <name type="common">Enterobacter sakazakii</name>
    <dbReference type="NCBI Taxonomy" id="290339"/>
    <lineage>
        <taxon>Bacteria</taxon>
        <taxon>Pseudomonadati</taxon>
        <taxon>Pseudomonadota</taxon>
        <taxon>Gammaproteobacteria</taxon>
        <taxon>Enterobacterales</taxon>
        <taxon>Enterobacteriaceae</taxon>
        <taxon>Cronobacter</taxon>
    </lineage>
</organism>
<accession>A7MKD4</accession>
<gene>
    <name evidence="1" type="primary">fadR</name>
    <name type="ordered locus">ESA_01467</name>
</gene>
<dbReference type="EMBL" id="CP000783">
    <property type="protein sequence ID" value="ABU76725.1"/>
    <property type="molecule type" value="Genomic_DNA"/>
</dbReference>
<dbReference type="RefSeq" id="WP_012124511.1">
    <property type="nucleotide sequence ID" value="NC_009778.1"/>
</dbReference>
<dbReference type="SMR" id="A7MKD4"/>
<dbReference type="KEGG" id="esa:ESA_01467"/>
<dbReference type="PATRIC" id="fig|290339.8.peg.1300"/>
<dbReference type="HOGENOM" id="CLU_017584_9_4_6"/>
<dbReference type="Proteomes" id="UP000000260">
    <property type="component" value="Chromosome"/>
</dbReference>
<dbReference type="GO" id="GO:0005737">
    <property type="term" value="C:cytoplasm"/>
    <property type="evidence" value="ECO:0007669"/>
    <property type="project" value="UniProtKB-SubCell"/>
</dbReference>
<dbReference type="GO" id="GO:0003677">
    <property type="term" value="F:DNA binding"/>
    <property type="evidence" value="ECO:0007669"/>
    <property type="project" value="UniProtKB-KW"/>
</dbReference>
<dbReference type="GO" id="GO:0003700">
    <property type="term" value="F:DNA-binding transcription factor activity"/>
    <property type="evidence" value="ECO:0007669"/>
    <property type="project" value="UniProtKB-UniRule"/>
</dbReference>
<dbReference type="GO" id="GO:0000062">
    <property type="term" value="F:fatty-acyl-CoA binding"/>
    <property type="evidence" value="ECO:0007669"/>
    <property type="project" value="InterPro"/>
</dbReference>
<dbReference type="GO" id="GO:0006631">
    <property type="term" value="P:fatty acid metabolic process"/>
    <property type="evidence" value="ECO:0007669"/>
    <property type="project" value="UniProtKB-KW"/>
</dbReference>
<dbReference type="GO" id="GO:0019217">
    <property type="term" value="P:regulation of fatty acid metabolic process"/>
    <property type="evidence" value="ECO:0007669"/>
    <property type="project" value="UniProtKB-UniRule"/>
</dbReference>
<dbReference type="CDD" id="cd07377">
    <property type="entry name" value="WHTH_GntR"/>
    <property type="match status" value="1"/>
</dbReference>
<dbReference type="FunFam" id="1.10.10.10:FF:000036">
    <property type="entry name" value="Fatty acid metabolism regulator protein"/>
    <property type="match status" value="1"/>
</dbReference>
<dbReference type="FunFam" id="1.20.120.530:FF:000003">
    <property type="entry name" value="Fatty acid metabolism regulator protein"/>
    <property type="match status" value="1"/>
</dbReference>
<dbReference type="Gene3D" id="1.20.120.530">
    <property type="entry name" value="GntR ligand-binding domain-like"/>
    <property type="match status" value="1"/>
</dbReference>
<dbReference type="Gene3D" id="1.10.10.10">
    <property type="entry name" value="Winged helix-like DNA-binding domain superfamily/Winged helix DNA-binding domain"/>
    <property type="match status" value="1"/>
</dbReference>
<dbReference type="HAMAP" id="MF_00696">
    <property type="entry name" value="HTH_FadR"/>
    <property type="match status" value="1"/>
</dbReference>
<dbReference type="InterPro" id="IPR014178">
    <property type="entry name" value="FA-response_TF_FadR"/>
</dbReference>
<dbReference type="InterPro" id="IPR028374">
    <property type="entry name" value="FadR_C"/>
</dbReference>
<dbReference type="InterPro" id="IPR008920">
    <property type="entry name" value="TF_FadR/GntR_C"/>
</dbReference>
<dbReference type="InterPro" id="IPR000524">
    <property type="entry name" value="Tscrpt_reg_HTH_GntR"/>
</dbReference>
<dbReference type="InterPro" id="IPR036388">
    <property type="entry name" value="WH-like_DNA-bd_sf"/>
</dbReference>
<dbReference type="InterPro" id="IPR036390">
    <property type="entry name" value="WH_DNA-bd_sf"/>
</dbReference>
<dbReference type="NCBIfam" id="TIGR02812">
    <property type="entry name" value="fadR_gamma"/>
    <property type="match status" value="1"/>
</dbReference>
<dbReference type="NCBIfam" id="NF003444">
    <property type="entry name" value="PRK04984.1"/>
    <property type="match status" value="1"/>
</dbReference>
<dbReference type="PANTHER" id="PTHR43537:SF52">
    <property type="entry name" value="FATTY ACID METABOLISM REGULATOR PROTEIN"/>
    <property type="match status" value="1"/>
</dbReference>
<dbReference type="PANTHER" id="PTHR43537">
    <property type="entry name" value="TRANSCRIPTIONAL REGULATOR, GNTR FAMILY"/>
    <property type="match status" value="1"/>
</dbReference>
<dbReference type="Pfam" id="PF07840">
    <property type="entry name" value="FadR_C"/>
    <property type="match status" value="1"/>
</dbReference>
<dbReference type="Pfam" id="PF00392">
    <property type="entry name" value="GntR"/>
    <property type="match status" value="1"/>
</dbReference>
<dbReference type="PRINTS" id="PR00035">
    <property type="entry name" value="HTHGNTR"/>
</dbReference>
<dbReference type="SMART" id="SM00345">
    <property type="entry name" value="HTH_GNTR"/>
    <property type="match status" value="1"/>
</dbReference>
<dbReference type="SUPFAM" id="SSF48008">
    <property type="entry name" value="GntR ligand-binding domain-like"/>
    <property type="match status" value="1"/>
</dbReference>
<dbReference type="SUPFAM" id="SSF46785">
    <property type="entry name" value="Winged helix' DNA-binding domain"/>
    <property type="match status" value="1"/>
</dbReference>
<dbReference type="PROSITE" id="PS50949">
    <property type="entry name" value="HTH_GNTR"/>
    <property type="match status" value="1"/>
</dbReference>
<evidence type="ECO:0000255" key="1">
    <source>
        <dbReference type="HAMAP-Rule" id="MF_00696"/>
    </source>
</evidence>